<comment type="similarity">
    <text evidence="1">Belongs to the UPF0434 family.</text>
</comment>
<dbReference type="EMBL" id="BX571864">
    <property type="protein sequence ID" value="CAE13926.1"/>
    <property type="molecule type" value="Genomic_DNA"/>
</dbReference>
<dbReference type="RefSeq" id="WP_011145924.1">
    <property type="nucleotide sequence ID" value="NC_005126.1"/>
</dbReference>
<dbReference type="SMR" id="Q7N6C3"/>
<dbReference type="STRING" id="243265.plu1633"/>
<dbReference type="GeneID" id="88805672"/>
<dbReference type="KEGG" id="plu:plu1633"/>
<dbReference type="eggNOG" id="COG2835">
    <property type="taxonomic scope" value="Bacteria"/>
</dbReference>
<dbReference type="HOGENOM" id="CLU_155659_3_1_6"/>
<dbReference type="OrthoDB" id="9812205at2"/>
<dbReference type="Proteomes" id="UP000002514">
    <property type="component" value="Chromosome"/>
</dbReference>
<dbReference type="GO" id="GO:0005829">
    <property type="term" value="C:cytosol"/>
    <property type="evidence" value="ECO:0007669"/>
    <property type="project" value="TreeGrafter"/>
</dbReference>
<dbReference type="FunFam" id="2.20.25.10:FF:000002">
    <property type="entry name" value="UPF0434 protein YcaR"/>
    <property type="match status" value="1"/>
</dbReference>
<dbReference type="Gene3D" id="2.20.25.10">
    <property type="match status" value="1"/>
</dbReference>
<dbReference type="HAMAP" id="MF_01187">
    <property type="entry name" value="UPF0434"/>
    <property type="match status" value="1"/>
</dbReference>
<dbReference type="InterPro" id="IPR005651">
    <property type="entry name" value="Trm112-like"/>
</dbReference>
<dbReference type="PANTHER" id="PTHR33505:SF4">
    <property type="entry name" value="PROTEIN PREY, MITOCHONDRIAL"/>
    <property type="match status" value="1"/>
</dbReference>
<dbReference type="PANTHER" id="PTHR33505">
    <property type="entry name" value="ZGC:162634"/>
    <property type="match status" value="1"/>
</dbReference>
<dbReference type="Pfam" id="PF03966">
    <property type="entry name" value="Trm112p"/>
    <property type="match status" value="1"/>
</dbReference>
<dbReference type="SUPFAM" id="SSF158997">
    <property type="entry name" value="Trm112p-like"/>
    <property type="match status" value="1"/>
</dbReference>
<evidence type="ECO:0000255" key="1">
    <source>
        <dbReference type="HAMAP-Rule" id="MF_01187"/>
    </source>
</evidence>
<feature type="chain" id="PRO_0000291126" description="UPF0434 protein plu1633">
    <location>
        <begin position="1"/>
        <end position="59"/>
    </location>
</feature>
<protein>
    <recommendedName>
        <fullName evidence="1">UPF0434 protein plu1633</fullName>
    </recommendedName>
</protein>
<name>Y1633_PHOLL</name>
<organism>
    <name type="scientific">Photorhabdus laumondii subsp. laumondii (strain DSM 15139 / CIP 105565 / TT01)</name>
    <name type="common">Photorhabdus luminescens subsp. laumondii</name>
    <dbReference type="NCBI Taxonomy" id="243265"/>
    <lineage>
        <taxon>Bacteria</taxon>
        <taxon>Pseudomonadati</taxon>
        <taxon>Pseudomonadota</taxon>
        <taxon>Gammaproteobacteria</taxon>
        <taxon>Enterobacterales</taxon>
        <taxon>Morganellaceae</taxon>
        <taxon>Photorhabdus</taxon>
    </lineage>
</organism>
<sequence>MDHRLLEIIACPVCNGKLSYDKENFELICKLDRLAFPVRDGIPVLLEHEARELPLDEEK</sequence>
<gene>
    <name type="ordered locus">plu1633</name>
</gene>
<keyword id="KW-1185">Reference proteome</keyword>
<proteinExistence type="inferred from homology"/>
<reference key="1">
    <citation type="journal article" date="2003" name="Nat. Biotechnol.">
        <title>The genome sequence of the entomopathogenic bacterium Photorhabdus luminescens.</title>
        <authorList>
            <person name="Duchaud E."/>
            <person name="Rusniok C."/>
            <person name="Frangeul L."/>
            <person name="Buchrieser C."/>
            <person name="Givaudan A."/>
            <person name="Taourit S."/>
            <person name="Bocs S."/>
            <person name="Boursaux-Eude C."/>
            <person name="Chandler M."/>
            <person name="Charles J.-F."/>
            <person name="Dassa E."/>
            <person name="Derose R."/>
            <person name="Derzelle S."/>
            <person name="Freyssinet G."/>
            <person name="Gaudriault S."/>
            <person name="Medigue C."/>
            <person name="Lanois A."/>
            <person name="Powell K."/>
            <person name="Siguier P."/>
            <person name="Vincent R."/>
            <person name="Wingate V."/>
            <person name="Zouine M."/>
            <person name="Glaser P."/>
            <person name="Boemare N."/>
            <person name="Danchin A."/>
            <person name="Kunst F."/>
        </authorList>
    </citation>
    <scope>NUCLEOTIDE SEQUENCE [LARGE SCALE GENOMIC DNA]</scope>
    <source>
        <strain>DSM 15139 / CIP 105565 / TT01</strain>
    </source>
</reference>
<accession>Q7N6C3</accession>